<feature type="peptide" id="PRO_0000223885" description="[Trp5]-bradykinin">
    <location>
        <begin position="1"/>
        <end position="9"/>
    </location>
</feature>
<evidence type="ECO:0000269" key="1">
    <source>
    </source>
</evidence>
<evidence type="ECO:0000305" key="2"/>
<comment type="function">
    <text evidence="1">Induces smooth muscle dilation and contraction. May target bradykinin receptors (BDKRB).</text>
</comment>
<comment type="subcellular location">
    <subcellularLocation>
        <location evidence="1">Secreted</location>
    </subcellularLocation>
</comment>
<comment type="tissue specificity">
    <text evidence="1">Plasma.</text>
</comment>
<comment type="similarity">
    <text evidence="2">Belongs to the bradykinin-related peptide family.</text>
</comment>
<name>BRK_LEPOS</name>
<reference evidence="2" key="1">
    <citation type="journal article" date="1995" name="Peptides">
        <title>Isolation and biological activity of [Trp5]bradykinin from the plasma of the phylogenetically ancient fish, the bowfin and the longnosed gar.</title>
        <authorList>
            <person name="Conlon J.M."/>
            <person name="Platzack B."/>
            <person name="Marra L.E."/>
            <person name="Youson J.H."/>
            <person name="Olson K.R."/>
        </authorList>
    </citation>
    <scope>PROTEIN SEQUENCE</scope>
    <scope>FUNCTION</scope>
    <scope>SUBCELLULAR LOCATION</scope>
    <scope>TISSUE SPECIFICITY</scope>
    <source>
        <tissue evidence="1">Plasma</tissue>
    </source>
</reference>
<dbReference type="GO" id="GO:0005615">
    <property type="term" value="C:extracellular space"/>
    <property type="evidence" value="ECO:0000314"/>
    <property type="project" value="UniProtKB"/>
</dbReference>
<dbReference type="GO" id="GO:0090729">
    <property type="term" value="F:toxin activity"/>
    <property type="evidence" value="ECO:0007669"/>
    <property type="project" value="UniProtKB-KW"/>
</dbReference>
<dbReference type="GO" id="GO:0045986">
    <property type="term" value="P:negative regulation of smooth muscle contraction"/>
    <property type="evidence" value="ECO:0000250"/>
    <property type="project" value="UniProtKB"/>
</dbReference>
<dbReference type="GO" id="GO:0045987">
    <property type="term" value="P:positive regulation of smooth muscle contraction"/>
    <property type="evidence" value="ECO:0000250"/>
    <property type="project" value="UniProtKB"/>
</dbReference>
<dbReference type="GO" id="GO:0042310">
    <property type="term" value="P:vasoconstriction"/>
    <property type="evidence" value="ECO:0007669"/>
    <property type="project" value="UniProtKB-KW"/>
</dbReference>
<dbReference type="GO" id="GO:0042311">
    <property type="term" value="P:vasodilation"/>
    <property type="evidence" value="ECO:0007669"/>
    <property type="project" value="UniProtKB-KW"/>
</dbReference>
<proteinExistence type="evidence at protein level"/>
<organism>
    <name type="scientific">Lepisosteus osseus</name>
    <name type="common">Long-nosed gar</name>
    <name type="synonym">Esox osseus</name>
    <dbReference type="NCBI Taxonomy" id="34771"/>
    <lineage>
        <taxon>Eukaryota</taxon>
        <taxon>Metazoa</taxon>
        <taxon>Chordata</taxon>
        <taxon>Craniata</taxon>
        <taxon>Vertebrata</taxon>
        <taxon>Euteleostomi</taxon>
        <taxon>Actinopterygii</taxon>
        <taxon>Neopterygii</taxon>
        <taxon>Holostei</taxon>
        <taxon>Semionotiformes</taxon>
        <taxon>Lepisosteidae</taxon>
        <taxon>Lepisosteus</taxon>
    </lineage>
</organism>
<accession>P84774</accession>
<accession>Q9PRJ4</accession>
<keyword id="KW-0903">Direct protein sequencing</keyword>
<keyword id="KW-1213">G-protein coupled receptor impairing toxin</keyword>
<keyword id="KW-0964">Secreted</keyword>
<keyword id="KW-0800">Toxin</keyword>
<keyword id="KW-0838">Vasoactive</keyword>
<keyword id="KW-0839">Vasoconstrictor</keyword>
<keyword id="KW-0840">Vasodilator</keyword>
<sequence length="9" mass="1099">RPPGWSPFR</sequence>
<protein>
    <recommendedName>
        <fullName>[Trp5]-bradykinin</fullName>
    </recommendedName>
</protein>